<protein>
    <recommendedName>
        <fullName evidence="1">Ferredoxin--NADP reductase 1</fullName>
        <shortName evidence="1">FNR 1</shortName>
        <shortName evidence="1">Fd-NADP(+) reductase 1</shortName>
        <ecNumber evidence="1">1.18.1.2</ecNumber>
    </recommendedName>
</protein>
<proteinExistence type="inferred from homology"/>
<evidence type="ECO:0000255" key="1">
    <source>
        <dbReference type="HAMAP-Rule" id="MF_01685"/>
    </source>
</evidence>
<reference key="1">
    <citation type="journal article" date="2008" name="Chem. Biol. Interact.">
        <title>Extending the Bacillus cereus group genomics to putative food-borne pathogens of different toxicity.</title>
        <authorList>
            <person name="Lapidus A."/>
            <person name="Goltsman E."/>
            <person name="Auger S."/>
            <person name="Galleron N."/>
            <person name="Segurens B."/>
            <person name="Dossat C."/>
            <person name="Land M.L."/>
            <person name="Broussolle V."/>
            <person name="Brillard J."/>
            <person name="Guinebretiere M.-H."/>
            <person name="Sanchis V."/>
            <person name="Nguen-the C."/>
            <person name="Lereclus D."/>
            <person name="Richardson P."/>
            <person name="Wincker P."/>
            <person name="Weissenbach J."/>
            <person name="Ehrlich S.D."/>
            <person name="Sorokin A."/>
        </authorList>
    </citation>
    <scope>NUCLEOTIDE SEQUENCE [LARGE SCALE GENOMIC DNA]</scope>
    <source>
        <strain>DSM 22905 / CIP 110041 / 391-98 / NVH 391-98</strain>
    </source>
</reference>
<dbReference type="EC" id="1.18.1.2" evidence="1"/>
<dbReference type="EMBL" id="CP000764">
    <property type="protein sequence ID" value="ABS20692.1"/>
    <property type="molecule type" value="Genomic_DNA"/>
</dbReference>
<dbReference type="RefSeq" id="WP_011983450.1">
    <property type="nucleotide sequence ID" value="NC_009674.1"/>
</dbReference>
<dbReference type="SMR" id="A7GKN4"/>
<dbReference type="STRING" id="315749.Bcer98_0331"/>
<dbReference type="GeneID" id="33895683"/>
<dbReference type="KEGG" id="bcy:Bcer98_0331"/>
<dbReference type="eggNOG" id="COG0492">
    <property type="taxonomic scope" value="Bacteria"/>
</dbReference>
<dbReference type="HOGENOM" id="CLU_031864_5_5_9"/>
<dbReference type="OrthoDB" id="9806179at2"/>
<dbReference type="Proteomes" id="UP000002300">
    <property type="component" value="Chromosome"/>
</dbReference>
<dbReference type="GO" id="GO:0004324">
    <property type="term" value="F:ferredoxin-NADP+ reductase activity"/>
    <property type="evidence" value="ECO:0007669"/>
    <property type="project" value="UniProtKB-UniRule"/>
</dbReference>
<dbReference type="GO" id="GO:0050660">
    <property type="term" value="F:flavin adenine dinucleotide binding"/>
    <property type="evidence" value="ECO:0007669"/>
    <property type="project" value="UniProtKB-UniRule"/>
</dbReference>
<dbReference type="GO" id="GO:0050661">
    <property type="term" value="F:NADP binding"/>
    <property type="evidence" value="ECO:0007669"/>
    <property type="project" value="UniProtKB-UniRule"/>
</dbReference>
<dbReference type="Gene3D" id="3.50.50.60">
    <property type="entry name" value="FAD/NAD(P)-binding domain"/>
    <property type="match status" value="2"/>
</dbReference>
<dbReference type="HAMAP" id="MF_01685">
    <property type="entry name" value="FENR2"/>
    <property type="match status" value="1"/>
</dbReference>
<dbReference type="InterPro" id="IPR036188">
    <property type="entry name" value="FAD/NAD-bd_sf"/>
</dbReference>
<dbReference type="InterPro" id="IPR023753">
    <property type="entry name" value="FAD/NAD-binding_dom"/>
</dbReference>
<dbReference type="InterPro" id="IPR022890">
    <property type="entry name" value="Fd--NADP_Rdtase_type_2"/>
</dbReference>
<dbReference type="InterPro" id="IPR050097">
    <property type="entry name" value="Ferredoxin-NADP_redctase_2"/>
</dbReference>
<dbReference type="PANTHER" id="PTHR48105">
    <property type="entry name" value="THIOREDOXIN REDUCTASE 1-RELATED-RELATED"/>
    <property type="match status" value="1"/>
</dbReference>
<dbReference type="Pfam" id="PF07992">
    <property type="entry name" value="Pyr_redox_2"/>
    <property type="match status" value="1"/>
</dbReference>
<dbReference type="PRINTS" id="PR00368">
    <property type="entry name" value="FADPNR"/>
</dbReference>
<dbReference type="PRINTS" id="PR00469">
    <property type="entry name" value="PNDRDTASEII"/>
</dbReference>
<dbReference type="SUPFAM" id="SSF51905">
    <property type="entry name" value="FAD/NAD(P)-binding domain"/>
    <property type="match status" value="1"/>
</dbReference>
<organism>
    <name type="scientific">Bacillus cytotoxicus (strain DSM 22905 / CIP 110041 / 391-98 / NVH 391-98)</name>
    <dbReference type="NCBI Taxonomy" id="315749"/>
    <lineage>
        <taxon>Bacteria</taxon>
        <taxon>Bacillati</taxon>
        <taxon>Bacillota</taxon>
        <taxon>Bacilli</taxon>
        <taxon>Bacillales</taxon>
        <taxon>Bacillaceae</taxon>
        <taxon>Bacillus</taxon>
        <taxon>Bacillus cereus group</taxon>
    </lineage>
</organism>
<gene>
    <name type="ordered locus">Bcer98_0331</name>
</gene>
<feature type="chain" id="PRO_0000364792" description="Ferredoxin--NADP reductase 1">
    <location>
        <begin position="1"/>
        <end position="349"/>
    </location>
</feature>
<feature type="binding site" evidence="1">
    <location>
        <position position="36"/>
    </location>
    <ligand>
        <name>FAD</name>
        <dbReference type="ChEBI" id="CHEBI:57692"/>
    </ligand>
</feature>
<feature type="binding site" evidence="1">
    <location>
        <position position="44"/>
    </location>
    <ligand>
        <name>FAD</name>
        <dbReference type="ChEBI" id="CHEBI:57692"/>
    </ligand>
</feature>
<feature type="binding site" evidence="1">
    <location>
        <position position="48"/>
    </location>
    <ligand>
        <name>FAD</name>
        <dbReference type="ChEBI" id="CHEBI:57692"/>
    </ligand>
</feature>
<feature type="binding site" evidence="1">
    <location>
        <position position="88"/>
    </location>
    <ligand>
        <name>FAD</name>
        <dbReference type="ChEBI" id="CHEBI:57692"/>
    </ligand>
</feature>
<feature type="binding site" evidence="1">
    <location>
        <position position="123"/>
    </location>
    <ligand>
        <name>FAD</name>
        <dbReference type="ChEBI" id="CHEBI:57692"/>
    </ligand>
</feature>
<feature type="binding site" evidence="1">
    <location>
        <position position="290"/>
    </location>
    <ligand>
        <name>FAD</name>
        <dbReference type="ChEBI" id="CHEBI:57692"/>
    </ligand>
</feature>
<feature type="binding site" evidence="1">
    <location>
        <position position="331"/>
    </location>
    <ligand>
        <name>FAD</name>
        <dbReference type="ChEBI" id="CHEBI:57692"/>
    </ligand>
</feature>
<comment type="catalytic activity">
    <reaction evidence="1">
        <text>2 reduced [2Fe-2S]-[ferredoxin] + NADP(+) + H(+) = 2 oxidized [2Fe-2S]-[ferredoxin] + NADPH</text>
        <dbReference type="Rhea" id="RHEA:20125"/>
        <dbReference type="Rhea" id="RHEA-COMP:10000"/>
        <dbReference type="Rhea" id="RHEA-COMP:10001"/>
        <dbReference type="ChEBI" id="CHEBI:15378"/>
        <dbReference type="ChEBI" id="CHEBI:33737"/>
        <dbReference type="ChEBI" id="CHEBI:33738"/>
        <dbReference type="ChEBI" id="CHEBI:57783"/>
        <dbReference type="ChEBI" id="CHEBI:58349"/>
        <dbReference type="EC" id="1.18.1.2"/>
    </reaction>
</comment>
<comment type="cofactor">
    <cofactor evidence="1">
        <name>FAD</name>
        <dbReference type="ChEBI" id="CHEBI:57692"/>
    </cofactor>
    <text evidence="1">Binds 1 FAD per subunit.</text>
</comment>
<comment type="subunit">
    <text evidence="1">Homodimer.</text>
</comment>
<comment type="similarity">
    <text evidence="1">Belongs to the ferredoxin--NADP reductase type 2 family.</text>
</comment>
<sequence length="349" mass="38598">MNKEELFDVTVIGGGPAGLYSAFYSGLREMKTKIIEFQPHLGGKIHVYPEKMIWDIGGLPPITGAKLIEQLVEQGLTFQPEVVLNEKVESITRDEYGTFLLTTSSGQQHFSKTVIIATGSGILKPQKLAIEGAERFEVSNLNYTVKSLKHFKDKTVIVSGGGNSAIDWANELEPLAKKVYVTYRKEALSGHEAQITQLLNSSVTCLLNTSITKLIAGENHEAIERVELTNHETGEISYLSIDEVIINHGYERDMTLLENSELNIEMIDNYFIAGNANSESSIPGLYAAGDILKHDGKLHLIAGAFHDAGNAVNKAKQFIQPDASEYGMVSSHNDVFKKRNRELMKQMIE</sequence>
<name>FENR1_BACCN</name>
<keyword id="KW-0274">FAD</keyword>
<keyword id="KW-0285">Flavoprotein</keyword>
<keyword id="KW-0521">NADP</keyword>
<keyword id="KW-0560">Oxidoreductase</keyword>
<accession>A7GKN4</accession>